<organism>
    <name type="scientific">Streptococcus pneumoniae (strain 70585)</name>
    <dbReference type="NCBI Taxonomy" id="488221"/>
    <lineage>
        <taxon>Bacteria</taxon>
        <taxon>Bacillati</taxon>
        <taxon>Bacillota</taxon>
        <taxon>Bacilli</taxon>
        <taxon>Lactobacillales</taxon>
        <taxon>Streptococcaceae</taxon>
        <taxon>Streptococcus</taxon>
    </lineage>
</organism>
<accession>C1C8R1</accession>
<sequence length="198" mass="21679">MLYPTPIAKLIDSYSKLPGIGIKTATRLAFYTIGMSADDVNEFAKNLLSAKRELTYCSICGRLTDDDPCSICTDSTRDQTTILVLEDSRDVAAMENIQEYHGLYHVLHGLISPMNGISPDDINLKSLMTRLMDSEVSEVIVATNATADGEATSMYLSRLLKPAGIKVTRLARGLAVGADIEYADEVTLLRAIENRTEL</sequence>
<dbReference type="EMBL" id="CP000918">
    <property type="protein sequence ID" value="ACO15945.1"/>
    <property type="molecule type" value="Genomic_DNA"/>
</dbReference>
<dbReference type="RefSeq" id="WP_000966746.1">
    <property type="nucleotide sequence ID" value="NC_012468.1"/>
</dbReference>
<dbReference type="SMR" id="C1C8R1"/>
<dbReference type="KEGG" id="snm:SP70585_1712"/>
<dbReference type="HOGENOM" id="CLU_060739_1_0_9"/>
<dbReference type="Proteomes" id="UP000002211">
    <property type="component" value="Chromosome"/>
</dbReference>
<dbReference type="GO" id="GO:0003677">
    <property type="term" value="F:DNA binding"/>
    <property type="evidence" value="ECO:0007669"/>
    <property type="project" value="UniProtKB-UniRule"/>
</dbReference>
<dbReference type="GO" id="GO:0008270">
    <property type="term" value="F:zinc ion binding"/>
    <property type="evidence" value="ECO:0007669"/>
    <property type="project" value="UniProtKB-KW"/>
</dbReference>
<dbReference type="GO" id="GO:0006310">
    <property type="term" value="P:DNA recombination"/>
    <property type="evidence" value="ECO:0007669"/>
    <property type="project" value="UniProtKB-UniRule"/>
</dbReference>
<dbReference type="GO" id="GO:0006281">
    <property type="term" value="P:DNA repair"/>
    <property type="evidence" value="ECO:0007669"/>
    <property type="project" value="UniProtKB-UniRule"/>
</dbReference>
<dbReference type="CDD" id="cd01025">
    <property type="entry name" value="TOPRIM_recR"/>
    <property type="match status" value="1"/>
</dbReference>
<dbReference type="Gene3D" id="3.30.60.80">
    <property type="match status" value="1"/>
</dbReference>
<dbReference type="Gene3D" id="3.40.1360.10">
    <property type="match status" value="1"/>
</dbReference>
<dbReference type="Gene3D" id="6.10.250.240">
    <property type="match status" value="1"/>
</dbReference>
<dbReference type="Gene3D" id="1.10.8.420">
    <property type="entry name" value="RecR Domain 1"/>
    <property type="match status" value="1"/>
</dbReference>
<dbReference type="HAMAP" id="MF_00017">
    <property type="entry name" value="RecR"/>
    <property type="match status" value="1"/>
</dbReference>
<dbReference type="InterPro" id="IPR000093">
    <property type="entry name" value="DNA_Rcmb_RecR"/>
</dbReference>
<dbReference type="InterPro" id="IPR023627">
    <property type="entry name" value="Rcmb_RecR"/>
</dbReference>
<dbReference type="InterPro" id="IPR015967">
    <property type="entry name" value="Rcmb_RecR_Znf"/>
</dbReference>
<dbReference type="InterPro" id="IPR006171">
    <property type="entry name" value="TOPRIM_dom"/>
</dbReference>
<dbReference type="InterPro" id="IPR034137">
    <property type="entry name" value="TOPRIM_RecR"/>
</dbReference>
<dbReference type="NCBIfam" id="TIGR00615">
    <property type="entry name" value="recR"/>
    <property type="match status" value="1"/>
</dbReference>
<dbReference type="PANTHER" id="PTHR30446">
    <property type="entry name" value="RECOMBINATION PROTEIN RECR"/>
    <property type="match status" value="1"/>
</dbReference>
<dbReference type="PANTHER" id="PTHR30446:SF0">
    <property type="entry name" value="RECOMBINATION PROTEIN RECR"/>
    <property type="match status" value="1"/>
</dbReference>
<dbReference type="Pfam" id="PF21175">
    <property type="entry name" value="RecR_C"/>
    <property type="match status" value="1"/>
</dbReference>
<dbReference type="Pfam" id="PF21176">
    <property type="entry name" value="RecR_HhH"/>
    <property type="match status" value="1"/>
</dbReference>
<dbReference type="Pfam" id="PF02132">
    <property type="entry name" value="RecR_ZnF"/>
    <property type="match status" value="1"/>
</dbReference>
<dbReference type="Pfam" id="PF13662">
    <property type="entry name" value="Toprim_4"/>
    <property type="match status" value="1"/>
</dbReference>
<dbReference type="SMART" id="SM00493">
    <property type="entry name" value="TOPRIM"/>
    <property type="match status" value="1"/>
</dbReference>
<dbReference type="SUPFAM" id="SSF111304">
    <property type="entry name" value="Recombination protein RecR"/>
    <property type="match status" value="1"/>
</dbReference>
<dbReference type="PROSITE" id="PS01300">
    <property type="entry name" value="RECR"/>
    <property type="match status" value="1"/>
</dbReference>
<dbReference type="PROSITE" id="PS50880">
    <property type="entry name" value="TOPRIM"/>
    <property type="match status" value="1"/>
</dbReference>
<proteinExistence type="inferred from homology"/>
<comment type="function">
    <text evidence="1">May play a role in DNA repair. It seems to be involved in an RecBC-independent recombinational process of DNA repair. It may act with RecF and RecO.</text>
</comment>
<comment type="similarity">
    <text evidence="1">Belongs to the RecR family.</text>
</comment>
<name>RECR_STRP7</name>
<reference key="1">
    <citation type="journal article" date="2010" name="Genome Biol.">
        <title>Structure and dynamics of the pan-genome of Streptococcus pneumoniae and closely related species.</title>
        <authorList>
            <person name="Donati C."/>
            <person name="Hiller N.L."/>
            <person name="Tettelin H."/>
            <person name="Muzzi A."/>
            <person name="Croucher N.J."/>
            <person name="Angiuoli S.V."/>
            <person name="Oggioni M."/>
            <person name="Dunning Hotopp J.C."/>
            <person name="Hu F.Z."/>
            <person name="Riley D.R."/>
            <person name="Covacci A."/>
            <person name="Mitchell T.J."/>
            <person name="Bentley S.D."/>
            <person name="Kilian M."/>
            <person name="Ehrlich G.D."/>
            <person name="Rappuoli R."/>
            <person name="Moxon E.R."/>
            <person name="Masignani V."/>
        </authorList>
    </citation>
    <scope>NUCLEOTIDE SEQUENCE [LARGE SCALE GENOMIC DNA]</scope>
    <source>
        <strain>70585</strain>
    </source>
</reference>
<protein>
    <recommendedName>
        <fullName evidence="1">Recombination protein RecR</fullName>
    </recommendedName>
</protein>
<feature type="chain" id="PRO_1000195411" description="Recombination protein RecR">
    <location>
        <begin position="1"/>
        <end position="198"/>
    </location>
</feature>
<feature type="domain" description="Toprim" evidence="1">
    <location>
        <begin position="80"/>
        <end position="175"/>
    </location>
</feature>
<feature type="zinc finger region" description="C4-type" evidence="1">
    <location>
        <begin position="57"/>
        <end position="72"/>
    </location>
</feature>
<gene>
    <name evidence="1" type="primary">recR</name>
    <name type="ordered locus">SP70585_1712</name>
</gene>
<evidence type="ECO:0000255" key="1">
    <source>
        <dbReference type="HAMAP-Rule" id="MF_00017"/>
    </source>
</evidence>
<keyword id="KW-0227">DNA damage</keyword>
<keyword id="KW-0233">DNA recombination</keyword>
<keyword id="KW-0234">DNA repair</keyword>
<keyword id="KW-0479">Metal-binding</keyword>
<keyword id="KW-0862">Zinc</keyword>
<keyword id="KW-0863">Zinc-finger</keyword>